<feature type="chain" id="PRO_0000296032" description="Small ribosomal subunit protein uS12">
    <location>
        <begin position="1"/>
        <end position="124"/>
    </location>
</feature>
<feature type="region of interest" description="Disordered" evidence="3">
    <location>
        <begin position="1"/>
        <end position="25"/>
    </location>
</feature>
<feature type="region of interest" description="Disordered" evidence="3">
    <location>
        <begin position="104"/>
        <end position="124"/>
    </location>
</feature>
<feature type="compositionally biased region" description="Basic residues" evidence="3">
    <location>
        <begin position="111"/>
        <end position="124"/>
    </location>
</feature>
<feature type="modified residue" description="3-methylthioaspartic acid" evidence="1">
    <location>
        <position position="89"/>
    </location>
</feature>
<comment type="function">
    <text evidence="2">With S4 and S5 plays an important role in translational accuracy.</text>
</comment>
<comment type="function">
    <text evidence="2">Interacts with and stabilizes bases of the 16S rRNA that are involved in tRNA selection in the A site and with the mRNA backbone. Located at the interface of the 30S and 50S subunits, it traverses the body of the 30S subunit contacting proteins on the other side and probably holding the rRNA structure together. The combined cluster of proteins S8, S12 and S17 appears to hold together the shoulder and platform of the 30S subunit.</text>
</comment>
<comment type="subunit">
    <text evidence="2">Part of the 30S ribosomal subunit. Contacts proteins S8 and S17. May interact with IF1 in the 30S initiation complex.</text>
</comment>
<comment type="similarity">
    <text evidence="2">Belongs to the universal ribosomal protein uS12 family.</text>
</comment>
<comment type="sequence caution" evidence="4">
    <conflict type="erroneous initiation">
        <sequence resource="EMBL-CDS" id="ABJ86078"/>
    </conflict>
</comment>
<protein>
    <recommendedName>
        <fullName evidence="2">Small ribosomal subunit protein uS12</fullName>
    </recommendedName>
    <alternativeName>
        <fullName evidence="4">30S ribosomal protein S12</fullName>
    </alternativeName>
</protein>
<dbReference type="EMBL" id="CP000473">
    <property type="protein sequence ID" value="ABJ86078.1"/>
    <property type="status" value="ALT_INIT"/>
    <property type="molecule type" value="Genomic_DNA"/>
</dbReference>
<dbReference type="SMR" id="Q01W87"/>
<dbReference type="FunCoup" id="Q01W87">
    <property type="interactions" value="629"/>
</dbReference>
<dbReference type="STRING" id="234267.Acid_5123"/>
<dbReference type="KEGG" id="sus:Acid_5123"/>
<dbReference type="eggNOG" id="COG0048">
    <property type="taxonomic scope" value="Bacteria"/>
</dbReference>
<dbReference type="HOGENOM" id="CLU_104295_1_2_0"/>
<dbReference type="InParanoid" id="Q01W87"/>
<dbReference type="OrthoDB" id="9802366at2"/>
<dbReference type="GO" id="GO:0015935">
    <property type="term" value="C:small ribosomal subunit"/>
    <property type="evidence" value="ECO:0007669"/>
    <property type="project" value="InterPro"/>
</dbReference>
<dbReference type="GO" id="GO:0019843">
    <property type="term" value="F:rRNA binding"/>
    <property type="evidence" value="ECO:0007669"/>
    <property type="project" value="UniProtKB-UniRule"/>
</dbReference>
<dbReference type="GO" id="GO:0003735">
    <property type="term" value="F:structural constituent of ribosome"/>
    <property type="evidence" value="ECO:0007669"/>
    <property type="project" value="InterPro"/>
</dbReference>
<dbReference type="GO" id="GO:0000049">
    <property type="term" value="F:tRNA binding"/>
    <property type="evidence" value="ECO:0007669"/>
    <property type="project" value="UniProtKB-UniRule"/>
</dbReference>
<dbReference type="GO" id="GO:0006412">
    <property type="term" value="P:translation"/>
    <property type="evidence" value="ECO:0007669"/>
    <property type="project" value="UniProtKB-UniRule"/>
</dbReference>
<dbReference type="CDD" id="cd03368">
    <property type="entry name" value="Ribosomal_S12"/>
    <property type="match status" value="1"/>
</dbReference>
<dbReference type="FunFam" id="2.40.50.140:FF:000001">
    <property type="entry name" value="30S ribosomal protein S12"/>
    <property type="match status" value="1"/>
</dbReference>
<dbReference type="Gene3D" id="2.40.50.140">
    <property type="entry name" value="Nucleic acid-binding proteins"/>
    <property type="match status" value="1"/>
</dbReference>
<dbReference type="HAMAP" id="MF_00403_B">
    <property type="entry name" value="Ribosomal_uS12_B"/>
    <property type="match status" value="1"/>
</dbReference>
<dbReference type="InterPro" id="IPR012340">
    <property type="entry name" value="NA-bd_OB-fold"/>
</dbReference>
<dbReference type="InterPro" id="IPR006032">
    <property type="entry name" value="Ribosomal_uS12"/>
</dbReference>
<dbReference type="InterPro" id="IPR005679">
    <property type="entry name" value="Ribosomal_uS12_bac"/>
</dbReference>
<dbReference type="NCBIfam" id="TIGR00981">
    <property type="entry name" value="rpsL_bact"/>
    <property type="match status" value="1"/>
</dbReference>
<dbReference type="PANTHER" id="PTHR11652">
    <property type="entry name" value="30S RIBOSOMAL PROTEIN S12 FAMILY MEMBER"/>
    <property type="match status" value="1"/>
</dbReference>
<dbReference type="Pfam" id="PF00164">
    <property type="entry name" value="Ribosom_S12_S23"/>
    <property type="match status" value="1"/>
</dbReference>
<dbReference type="PIRSF" id="PIRSF002133">
    <property type="entry name" value="Ribosomal_S12/S23"/>
    <property type="match status" value="1"/>
</dbReference>
<dbReference type="PRINTS" id="PR01034">
    <property type="entry name" value="RIBOSOMALS12"/>
</dbReference>
<dbReference type="SUPFAM" id="SSF50249">
    <property type="entry name" value="Nucleic acid-binding proteins"/>
    <property type="match status" value="1"/>
</dbReference>
<dbReference type="PROSITE" id="PS00055">
    <property type="entry name" value="RIBOSOMAL_S12"/>
    <property type="match status" value="1"/>
</dbReference>
<evidence type="ECO:0000250" key="1"/>
<evidence type="ECO:0000255" key="2">
    <source>
        <dbReference type="HAMAP-Rule" id="MF_00403"/>
    </source>
</evidence>
<evidence type="ECO:0000256" key="3">
    <source>
        <dbReference type="SAM" id="MobiDB-lite"/>
    </source>
</evidence>
<evidence type="ECO:0000305" key="4"/>
<name>RS12_SOLUE</name>
<gene>
    <name evidence="2" type="primary">rpsL</name>
    <name type="ordered locus">Acid_5123</name>
</gene>
<accession>Q01W87</accession>
<reference key="1">
    <citation type="journal article" date="2009" name="Appl. Environ. Microbiol.">
        <title>Three genomes from the phylum Acidobacteria provide insight into the lifestyles of these microorganisms in soils.</title>
        <authorList>
            <person name="Ward N.L."/>
            <person name="Challacombe J.F."/>
            <person name="Janssen P.H."/>
            <person name="Henrissat B."/>
            <person name="Coutinho P.M."/>
            <person name="Wu M."/>
            <person name="Xie G."/>
            <person name="Haft D.H."/>
            <person name="Sait M."/>
            <person name="Badger J."/>
            <person name="Barabote R.D."/>
            <person name="Bradley B."/>
            <person name="Brettin T.S."/>
            <person name="Brinkac L.M."/>
            <person name="Bruce D."/>
            <person name="Creasy T."/>
            <person name="Daugherty S.C."/>
            <person name="Davidsen T.M."/>
            <person name="DeBoy R.T."/>
            <person name="Detter J.C."/>
            <person name="Dodson R.J."/>
            <person name="Durkin A.S."/>
            <person name="Ganapathy A."/>
            <person name="Gwinn-Giglio M."/>
            <person name="Han C.S."/>
            <person name="Khouri H."/>
            <person name="Kiss H."/>
            <person name="Kothari S.P."/>
            <person name="Madupu R."/>
            <person name="Nelson K.E."/>
            <person name="Nelson W.C."/>
            <person name="Paulsen I."/>
            <person name="Penn K."/>
            <person name="Ren Q."/>
            <person name="Rosovitz M.J."/>
            <person name="Selengut J.D."/>
            <person name="Shrivastava S."/>
            <person name="Sullivan S.A."/>
            <person name="Tapia R."/>
            <person name="Thompson L.S."/>
            <person name="Watkins K.L."/>
            <person name="Yang Q."/>
            <person name="Yu C."/>
            <person name="Zafar N."/>
            <person name="Zhou L."/>
            <person name="Kuske C.R."/>
        </authorList>
    </citation>
    <scope>NUCLEOTIDE SEQUENCE [LARGE SCALE GENOMIC DNA]</scope>
    <source>
        <strain>Ellin6076</strain>
    </source>
</reference>
<organism>
    <name type="scientific">Solibacter usitatus (strain Ellin6076)</name>
    <dbReference type="NCBI Taxonomy" id="234267"/>
    <lineage>
        <taxon>Bacteria</taxon>
        <taxon>Pseudomonadati</taxon>
        <taxon>Acidobacteriota</taxon>
        <taxon>Terriglobia</taxon>
        <taxon>Bryobacterales</taxon>
        <taxon>Solibacteraceae</taxon>
        <taxon>Candidatus Solibacter</taxon>
    </lineage>
</organism>
<proteinExistence type="inferred from homology"/>
<sequence>MPTFNQLVRNGRKPPRWKTSSPALESCPQKRGVCTRVYTSTPKKPNSALRKVARVRLTNGIEVTTYIPGVGHNLQEHSIVLIRGGRVKDLPGVRYHVIRGALDTAGVANRKQSRSKYGAKRPKS</sequence>
<keyword id="KW-0488">Methylation</keyword>
<keyword id="KW-0687">Ribonucleoprotein</keyword>
<keyword id="KW-0689">Ribosomal protein</keyword>
<keyword id="KW-0694">RNA-binding</keyword>
<keyword id="KW-0699">rRNA-binding</keyword>
<keyword id="KW-0820">tRNA-binding</keyword>